<dbReference type="EC" id="2.1.2.1" evidence="1"/>
<dbReference type="EMBL" id="CP000086">
    <property type="protein sequence ID" value="ABC39115.1"/>
    <property type="status" value="ALT_INIT"/>
    <property type="molecule type" value="Genomic_DNA"/>
</dbReference>
<dbReference type="RefSeq" id="WP_009889382.1">
    <property type="nucleotide sequence ID" value="NC_007651.1"/>
</dbReference>
<dbReference type="SMR" id="Q2SYS4"/>
<dbReference type="GeneID" id="45121122"/>
<dbReference type="KEGG" id="bte:BTH_I1379"/>
<dbReference type="HOGENOM" id="CLU_022477_2_1_4"/>
<dbReference type="UniPathway" id="UPA00193"/>
<dbReference type="UniPathway" id="UPA00288">
    <property type="reaction ID" value="UER01023"/>
</dbReference>
<dbReference type="Proteomes" id="UP000001930">
    <property type="component" value="Chromosome I"/>
</dbReference>
<dbReference type="GO" id="GO:0005829">
    <property type="term" value="C:cytosol"/>
    <property type="evidence" value="ECO:0007669"/>
    <property type="project" value="TreeGrafter"/>
</dbReference>
<dbReference type="GO" id="GO:0004372">
    <property type="term" value="F:glycine hydroxymethyltransferase activity"/>
    <property type="evidence" value="ECO:0007669"/>
    <property type="project" value="UniProtKB-UniRule"/>
</dbReference>
<dbReference type="GO" id="GO:0030170">
    <property type="term" value="F:pyridoxal phosphate binding"/>
    <property type="evidence" value="ECO:0007669"/>
    <property type="project" value="UniProtKB-UniRule"/>
</dbReference>
<dbReference type="GO" id="GO:0019264">
    <property type="term" value="P:glycine biosynthetic process from serine"/>
    <property type="evidence" value="ECO:0007669"/>
    <property type="project" value="UniProtKB-UniRule"/>
</dbReference>
<dbReference type="GO" id="GO:0035999">
    <property type="term" value="P:tetrahydrofolate interconversion"/>
    <property type="evidence" value="ECO:0007669"/>
    <property type="project" value="UniProtKB-UniRule"/>
</dbReference>
<dbReference type="CDD" id="cd00378">
    <property type="entry name" value="SHMT"/>
    <property type="match status" value="1"/>
</dbReference>
<dbReference type="FunFam" id="3.40.640.10:FF:000001">
    <property type="entry name" value="Serine hydroxymethyltransferase"/>
    <property type="match status" value="1"/>
</dbReference>
<dbReference type="FunFam" id="3.90.1150.10:FF:000003">
    <property type="entry name" value="Serine hydroxymethyltransferase"/>
    <property type="match status" value="1"/>
</dbReference>
<dbReference type="Gene3D" id="3.90.1150.10">
    <property type="entry name" value="Aspartate Aminotransferase, domain 1"/>
    <property type="match status" value="1"/>
</dbReference>
<dbReference type="Gene3D" id="3.40.640.10">
    <property type="entry name" value="Type I PLP-dependent aspartate aminotransferase-like (Major domain)"/>
    <property type="match status" value="1"/>
</dbReference>
<dbReference type="HAMAP" id="MF_00051">
    <property type="entry name" value="SHMT"/>
    <property type="match status" value="1"/>
</dbReference>
<dbReference type="InterPro" id="IPR015424">
    <property type="entry name" value="PyrdxlP-dep_Trfase"/>
</dbReference>
<dbReference type="InterPro" id="IPR015421">
    <property type="entry name" value="PyrdxlP-dep_Trfase_major"/>
</dbReference>
<dbReference type="InterPro" id="IPR015422">
    <property type="entry name" value="PyrdxlP-dep_Trfase_small"/>
</dbReference>
<dbReference type="InterPro" id="IPR001085">
    <property type="entry name" value="Ser_HO-MeTrfase"/>
</dbReference>
<dbReference type="InterPro" id="IPR049943">
    <property type="entry name" value="Ser_HO-MeTrfase-like"/>
</dbReference>
<dbReference type="InterPro" id="IPR019798">
    <property type="entry name" value="Ser_HO-MeTrfase_PLP_BS"/>
</dbReference>
<dbReference type="InterPro" id="IPR039429">
    <property type="entry name" value="SHMT-like_dom"/>
</dbReference>
<dbReference type="NCBIfam" id="NF000586">
    <property type="entry name" value="PRK00011.1"/>
    <property type="match status" value="1"/>
</dbReference>
<dbReference type="PANTHER" id="PTHR11680">
    <property type="entry name" value="SERINE HYDROXYMETHYLTRANSFERASE"/>
    <property type="match status" value="1"/>
</dbReference>
<dbReference type="PANTHER" id="PTHR11680:SF50">
    <property type="entry name" value="SERINE HYDROXYMETHYLTRANSFERASE"/>
    <property type="match status" value="1"/>
</dbReference>
<dbReference type="Pfam" id="PF00464">
    <property type="entry name" value="SHMT"/>
    <property type="match status" value="1"/>
</dbReference>
<dbReference type="PIRSF" id="PIRSF000412">
    <property type="entry name" value="SHMT"/>
    <property type="match status" value="1"/>
</dbReference>
<dbReference type="SUPFAM" id="SSF53383">
    <property type="entry name" value="PLP-dependent transferases"/>
    <property type="match status" value="1"/>
</dbReference>
<dbReference type="PROSITE" id="PS00096">
    <property type="entry name" value="SHMT"/>
    <property type="match status" value="1"/>
</dbReference>
<evidence type="ECO:0000255" key="1">
    <source>
        <dbReference type="HAMAP-Rule" id="MF_00051"/>
    </source>
</evidence>
<evidence type="ECO:0000305" key="2"/>
<comment type="function">
    <text evidence="1">Catalyzes the reversible interconversion of serine and glycine with tetrahydrofolate (THF) serving as the one-carbon carrier. This reaction serves as the major source of one-carbon groups required for the biosynthesis of purines, thymidylate, methionine, and other important biomolecules. Also exhibits THF-independent aldolase activity toward beta-hydroxyamino acids, producing glycine and aldehydes, via a retro-aldol mechanism.</text>
</comment>
<comment type="catalytic activity">
    <reaction evidence="1">
        <text>(6R)-5,10-methylene-5,6,7,8-tetrahydrofolate + glycine + H2O = (6S)-5,6,7,8-tetrahydrofolate + L-serine</text>
        <dbReference type="Rhea" id="RHEA:15481"/>
        <dbReference type="ChEBI" id="CHEBI:15377"/>
        <dbReference type="ChEBI" id="CHEBI:15636"/>
        <dbReference type="ChEBI" id="CHEBI:33384"/>
        <dbReference type="ChEBI" id="CHEBI:57305"/>
        <dbReference type="ChEBI" id="CHEBI:57453"/>
        <dbReference type="EC" id="2.1.2.1"/>
    </reaction>
</comment>
<comment type="cofactor">
    <cofactor evidence="1">
        <name>pyridoxal 5'-phosphate</name>
        <dbReference type="ChEBI" id="CHEBI:597326"/>
    </cofactor>
</comment>
<comment type="pathway">
    <text evidence="1">One-carbon metabolism; tetrahydrofolate interconversion.</text>
</comment>
<comment type="pathway">
    <text evidence="1">Amino-acid biosynthesis; glycine biosynthesis; glycine from L-serine: step 1/1.</text>
</comment>
<comment type="subunit">
    <text evidence="1">Homodimer.</text>
</comment>
<comment type="subcellular location">
    <subcellularLocation>
        <location evidence="1">Cytoplasm</location>
    </subcellularLocation>
</comment>
<comment type="similarity">
    <text evidence="1">Belongs to the SHMT family.</text>
</comment>
<comment type="sequence caution" evidence="2">
    <conflict type="erroneous initiation">
        <sequence resource="EMBL-CDS" id="ABC39115"/>
    </conflict>
</comment>
<keyword id="KW-0028">Amino-acid biosynthesis</keyword>
<keyword id="KW-0963">Cytoplasm</keyword>
<keyword id="KW-0554">One-carbon metabolism</keyword>
<keyword id="KW-0663">Pyridoxal phosphate</keyword>
<keyword id="KW-0808">Transferase</keyword>
<reference key="1">
    <citation type="journal article" date="2005" name="BMC Genomics">
        <title>Bacterial genome adaptation to niches: divergence of the potential virulence genes in three Burkholderia species of different survival strategies.</title>
        <authorList>
            <person name="Kim H.S."/>
            <person name="Schell M.A."/>
            <person name="Yu Y."/>
            <person name="Ulrich R.L."/>
            <person name="Sarria S.H."/>
            <person name="Nierman W.C."/>
            <person name="DeShazer D."/>
        </authorList>
    </citation>
    <scope>NUCLEOTIDE SEQUENCE [LARGE SCALE GENOMIC DNA]</scope>
    <source>
        <strain>ATCC 700388 / DSM 13276 / CCUG 48851 / CIP 106301 / E264</strain>
    </source>
</reference>
<name>GLYA1_BURTA</name>
<gene>
    <name evidence="1" type="primary">glyA1</name>
    <name type="ordered locus">BTH_I1379</name>
</gene>
<proteinExistence type="inferred from homology"/>
<accession>Q2SYS4</accession>
<organism>
    <name type="scientific">Burkholderia thailandensis (strain ATCC 700388 / DSM 13276 / CCUG 48851 / CIP 106301 / E264)</name>
    <dbReference type="NCBI Taxonomy" id="271848"/>
    <lineage>
        <taxon>Bacteria</taxon>
        <taxon>Pseudomonadati</taxon>
        <taxon>Pseudomonadota</taxon>
        <taxon>Betaproteobacteria</taxon>
        <taxon>Burkholderiales</taxon>
        <taxon>Burkholderiaceae</taxon>
        <taxon>Burkholderia</taxon>
        <taxon>pseudomallei group</taxon>
    </lineage>
</organism>
<sequence>MFDRAQSTIANVDPEIWQAIQQENVRQEEHIELIASENYTSPAVMAAQGSQLTNKYAEGYPGKRYYGGCEYVDIVEQLAIDRVKALFGSEAANVQPNSGSQANQGVFFAMLKPGDTIMGMSLAHGGHLTHGSPVNMSGKWFNVVSYGLNENEDIDYEAADKLAHEHKPKLIVAGASAFALKIDFERLAKIAKAVGAYLMVDMAHYAGLIAAGVYPNPVPHADFVTTTTHKSLRGPRGGVILMKAEYEKQINSAIFPGIQGGPLMHVIAAKAVAFKEALSPEFKEYQQKVIENARVLAETLVKRGLRIVSGRTESHVMLVDLRAKNITGKAAEAALGNAHITVNKNAIPNDPEKPFVTSGVRLGSPAMTTRGFGPQEAELVGNLIADVLEHPEDAATIERVRAQVADLTKRFPVYR</sequence>
<feature type="chain" id="PRO_0000234960" description="Serine hydroxymethyltransferase 1">
    <location>
        <begin position="1"/>
        <end position="415"/>
    </location>
</feature>
<feature type="binding site" evidence="1">
    <location>
        <position position="122"/>
    </location>
    <ligand>
        <name>(6S)-5,6,7,8-tetrahydrofolate</name>
        <dbReference type="ChEBI" id="CHEBI:57453"/>
    </ligand>
</feature>
<feature type="binding site" evidence="1">
    <location>
        <begin position="126"/>
        <end position="128"/>
    </location>
    <ligand>
        <name>(6S)-5,6,7,8-tetrahydrofolate</name>
        <dbReference type="ChEBI" id="CHEBI:57453"/>
    </ligand>
</feature>
<feature type="site" description="Plays an important role in substrate specificity" evidence="1">
    <location>
        <position position="229"/>
    </location>
</feature>
<feature type="modified residue" description="N6-(pyridoxal phosphate)lysine" evidence="1">
    <location>
        <position position="230"/>
    </location>
</feature>
<protein>
    <recommendedName>
        <fullName evidence="1">Serine hydroxymethyltransferase 1</fullName>
        <shortName evidence="1">SHMT 1</shortName>
        <shortName evidence="1">Serine methylase 1</shortName>
        <ecNumber evidence="1">2.1.2.1</ecNumber>
    </recommendedName>
</protein>